<protein>
    <recommendedName>
        <fullName evidence="1">Co-chaperonin GroES</fullName>
    </recommendedName>
    <alternativeName>
        <fullName evidence="1">10 kDa chaperonin</fullName>
    </alternativeName>
    <alternativeName>
        <fullName evidence="1">Chaperonin-10</fullName>
        <shortName evidence="1">Cpn10</shortName>
    </alternativeName>
</protein>
<organism>
    <name type="scientific">Mycolicibacterium gilvum (strain PYR-GCK)</name>
    <name type="common">Mycobacterium gilvum (strain PYR-GCK)</name>
    <dbReference type="NCBI Taxonomy" id="350054"/>
    <lineage>
        <taxon>Bacteria</taxon>
        <taxon>Bacillati</taxon>
        <taxon>Actinomycetota</taxon>
        <taxon>Actinomycetes</taxon>
        <taxon>Mycobacteriales</taxon>
        <taxon>Mycobacteriaceae</taxon>
        <taxon>Mycolicibacterium</taxon>
    </lineage>
</organism>
<gene>
    <name evidence="1" type="primary">groES</name>
    <name evidence="1" type="synonym">groS</name>
    <name type="ordered locus">Mflv_4925</name>
</gene>
<name>CH10_MYCGI</name>
<evidence type="ECO:0000255" key="1">
    <source>
        <dbReference type="HAMAP-Rule" id="MF_00580"/>
    </source>
</evidence>
<comment type="function">
    <text evidence="1">Together with the chaperonin GroEL, plays an essential role in assisting protein folding. The GroEL-GroES system forms a nano-cage that allows encapsulation of the non-native substrate proteins and provides a physical environment optimized to promote and accelerate protein folding. GroES binds to the apical surface of the GroEL ring, thereby capping the opening of the GroEL channel.</text>
</comment>
<comment type="subunit">
    <text evidence="1">Heptamer of 7 subunits arranged in a ring. Interacts with the chaperonin GroEL.</text>
</comment>
<comment type="subcellular location">
    <subcellularLocation>
        <location evidence="1">Cytoplasm</location>
    </subcellularLocation>
</comment>
<comment type="similarity">
    <text evidence="1">Belongs to the GroES chaperonin family.</text>
</comment>
<keyword id="KW-0143">Chaperone</keyword>
<keyword id="KW-0963">Cytoplasm</keyword>
<accession>A4TEN7</accession>
<reference key="1">
    <citation type="submission" date="2007-04" db="EMBL/GenBank/DDBJ databases">
        <title>Complete sequence of chromosome of Mycobacterium gilvum PYR-GCK.</title>
        <authorList>
            <consortium name="US DOE Joint Genome Institute"/>
            <person name="Copeland A."/>
            <person name="Lucas S."/>
            <person name="Lapidus A."/>
            <person name="Barry K."/>
            <person name="Detter J.C."/>
            <person name="Glavina del Rio T."/>
            <person name="Hammon N."/>
            <person name="Israni S."/>
            <person name="Dalin E."/>
            <person name="Tice H."/>
            <person name="Pitluck S."/>
            <person name="Chain P."/>
            <person name="Malfatti S."/>
            <person name="Shin M."/>
            <person name="Vergez L."/>
            <person name="Schmutz J."/>
            <person name="Larimer F."/>
            <person name="Land M."/>
            <person name="Hauser L."/>
            <person name="Kyrpides N."/>
            <person name="Mikhailova N."/>
            <person name="Miller C."/>
            <person name="Richardson P."/>
        </authorList>
    </citation>
    <scope>NUCLEOTIDE SEQUENCE [LARGE SCALE GENOMIC DNA]</scope>
    <source>
        <strain>PYR-GCK</strain>
    </source>
</reference>
<sequence length="100" mass="10777">MASVNIKPLEDKILVQANEAETTTASGLVIPDTAKEKPQEGTVVAVGPGRWDEDGEKRIPLDVSEGDVVIYSKYGGTEIKYNGEEYLILSARDVLAVVSK</sequence>
<feature type="chain" id="PRO_1000082382" description="Co-chaperonin GroES">
    <location>
        <begin position="1"/>
        <end position="100"/>
    </location>
</feature>
<proteinExistence type="inferred from homology"/>
<dbReference type="EMBL" id="CP000656">
    <property type="protein sequence ID" value="ABP47391.1"/>
    <property type="molecule type" value="Genomic_DNA"/>
</dbReference>
<dbReference type="SMR" id="A4TEN7"/>
<dbReference type="STRING" id="350054.Mflv_4925"/>
<dbReference type="KEGG" id="mgi:Mflv_4925"/>
<dbReference type="eggNOG" id="COG0234">
    <property type="taxonomic scope" value="Bacteria"/>
</dbReference>
<dbReference type="HOGENOM" id="CLU_132825_2_0_11"/>
<dbReference type="OrthoDB" id="9806791at2"/>
<dbReference type="GO" id="GO:0005737">
    <property type="term" value="C:cytoplasm"/>
    <property type="evidence" value="ECO:0007669"/>
    <property type="project" value="UniProtKB-SubCell"/>
</dbReference>
<dbReference type="GO" id="GO:0005524">
    <property type="term" value="F:ATP binding"/>
    <property type="evidence" value="ECO:0007669"/>
    <property type="project" value="InterPro"/>
</dbReference>
<dbReference type="GO" id="GO:0046872">
    <property type="term" value="F:metal ion binding"/>
    <property type="evidence" value="ECO:0007669"/>
    <property type="project" value="TreeGrafter"/>
</dbReference>
<dbReference type="GO" id="GO:0044183">
    <property type="term" value="F:protein folding chaperone"/>
    <property type="evidence" value="ECO:0007669"/>
    <property type="project" value="InterPro"/>
</dbReference>
<dbReference type="GO" id="GO:0051087">
    <property type="term" value="F:protein-folding chaperone binding"/>
    <property type="evidence" value="ECO:0007669"/>
    <property type="project" value="TreeGrafter"/>
</dbReference>
<dbReference type="GO" id="GO:0051082">
    <property type="term" value="F:unfolded protein binding"/>
    <property type="evidence" value="ECO:0007669"/>
    <property type="project" value="TreeGrafter"/>
</dbReference>
<dbReference type="GO" id="GO:0051085">
    <property type="term" value="P:chaperone cofactor-dependent protein refolding"/>
    <property type="evidence" value="ECO:0007669"/>
    <property type="project" value="TreeGrafter"/>
</dbReference>
<dbReference type="CDD" id="cd00320">
    <property type="entry name" value="cpn10"/>
    <property type="match status" value="1"/>
</dbReference>
<dbReference type="FunFam" id="2.30.33.40:FF:000001">
    <property type="entry name" value="10 kDa chaperonin"/>
    <property type="match status" value="1"/>
</dbReference>
<dbReference type="Gene3D" id="2.30.33.40">
    <property type="entry name" value="GroES chaperonin"/>
    <property type="match status" value="1"/>
</dbReference>
<dbReference type="HAMAP" id="MF_00580">
    <property type="entry name" value="CH10"/>
    <property type="match status" value="1"/>
</dbReference>
<dbReference type="InterPro" id="IPR020818">
    <property type="entry name" value="Chaperonin_GroES"/>
</dbReference>
<dbReference type="InterPro" id="IPR037124">
    <property type="entry name" value="Chaperonin_GroES_sf"/>
</dbReference>
<dbReference type="InterPro" id="IPR018369">
    <property type="entry name" value="Chaprnonin_Cpn10_CS"/>
</dbReference>
<dbReference type="InterPro" id="IPR011032">
    <property type="entry name" value="GroES-like_sf"/>
</dbReference>
<dbReference type="NCBIfam" id="NF001530">
    <property type="entry name" value="PRK00364.1-6"/>
    <property type="match status" value="1"/>
</dbReference>
<dbReference type="NCBIfam" id="NF001531">
    <property type="entry name" value="PRK00364.2-2"/>
    <property type="match status" value="1"/>
</dbReference>
<dbReference type="NCBIfam" id="NF001533">
    <property type="entry name" value="PRK00364.2-4"/>
    <property type="match status" value="1"/>
</dbReference>
<dbReference type="NCBIfam" id="NF001534">
    <property type="entry name" value="PRK00364.2-5"/>
    <property type="match status" value="1"/>
</dbReference>
<dbReference type="PANTHER" id="PTHR10772">
    <property type="entry name" value="10 KDA HEAT SHOCK PROTEIN"/>
    <property type="match status" value="1"/>
</dbReference>
<dbReference type="PANTHER" id="PTHR10772:SF58">
    <property type="entry name" value="CO-CHAPERONIN GROES"/>
    <property type="match status" value="1"/>
</dbReference>
<dbReference type="Pfam" id="PF00166">
    <property type="entry name" value="Cpn10"/>
    <property type="match status" value="1"/>
</dbReference>
<dbReference type="PRINTS" id="PR00297">
    <property type="entry name" value="CHAPERONIN10"/>
</dbReference>
<dbReference type="SMART" id="SM00883">
    <property type="entry name" value="Cpn10"/>
    <property type="match status" value="1"/>
</dbReference>
<dbReference type="SUPFAM" id="SSF50129">
    <property type="entry name" value="GroES-like"/>
    <property type="match status" value="1"/>
</dbReference>
<dbReference type="PROSITE" id="PS00681">
    <property type="entry name" value="CHAPERONINS_CPN10"/>
    <property type="match status" value="1"/>
</dbReference>